<accession>Q5NY31</accession>
<protein>
    <recommendedName>
        <fullName evidence="1">Lysine--tRNA ligase</fullName>
        <ecNumber evidence="1">6.1.1.6</ecNumber>
    </recommendedName>
    <alternativeName>
        <fullName evidence="1">Lysyl-tRNA synthetase</fullName>
        <shortName evidence="1">LysRS</shortName>
    </alternativeName>
</protein>
<name>SYK_AROAE</name>
<proteinExistence type="inferred from homology"/>
<reference key="1">
    <citation type="journal article" date="2005" name="Arch. Microbiol.">
        <title>The genome sequence of an anaerobic aromatic-degrading denitrifying bacterium, strain EbN1.</title>
        <authorList>
            <person name="Rabus R."/>
            <person name="Kube M."/>
            <person name="Heider J."/>
            <person name="Beck A."/>
            <person name="Heitmann K."/>
            <person name="Widdel F."/>
            <person name="Reinhardt R."/>
        </authorList>
    </citation>
    <scope>NUCLEOTIDE SEQUENCE [LARGE SCALE GENOMIC DNA]</scope>
    <source>
        <strain>DSM 19018 / LMG 30748 / EbN1</strain>
    </source>
</reference>
<feature type="chain" id="PRO_1000012840" description="Lysine--tRNA ligase">
    <location>
        <begin position="1"/>
        <end position="502"/>
    </location>
</feature>
<feature type="binding site" evidence="1">
    <location>
        <position position="413"/>
    </location>
    <ligand>
        <name>Mg(2+)</name>
        <dbReference type="ChEBI" id="CHEBI:18420"/>
        <label>1</label>
    </ligand>
</feature>
<feature type="binding site" evidence="1">
    <location>
        <position position="420"/>
    </location>
    <ligand>
        <name>Mg(2+)</name>
        <dbReference type="ChEBI" id="CHEBI:18420"/>
        <label>1</label>
    </ligand>
</feature>
<feature type="binding site" evidence="1">
    <location>
        <position position="420"/>
    </location>
    <ligand>
        <name>Mg(2+)</name>
        <dbReference type="ChEBI" id="CHEBI:18420"/>
        <label>2</label>
    </ligand>
</feature>
<organism>
    <name type="scientific">Aromatoleum aromaticum (strain DSM 19018 / LMG 30748 / EbN1)</name>
    <name type="common">Azoarcus sp. (strain EbN1)</name>
    <dbReference type="NCBI Taxonomy" id="76114"/>
    <lineage>
        <taxon>Bacteria</taxon>
        <taxon>Pseudomonadati</taxon>
        <taxon>Pseudomonadota</taxon>
        <taxon>Betaproteobacteria</taxon>
        <taxon>Rhodocyclales</taxon>
        <taxon>Rhodocyclaceae</taxon>
        <taxon>Aromatoleum</taxon>
    </lineage>
</organism>
<gene>
    <name evidence="1" type="primary">lysS</name>
    <name type="ordered locus">AZOSEA39080</name>
    <name type="ORF">ebA6841</name>
</gene>
<evidence type="ECO:0000255" key="1">
    <source>
        <dbReference type="HAMAP-Rule" id="MF_00252"/>
    </source>
</evidence>
<dbReference type="EC" id="6.1.1.6" evidence="1"/>
<dbReference type="EMBL" id="CR555306">
    <property type="protein sequence ID" value="CAI10033.1"/>
    <property type="molecule type" value="Genomic_DNA"/>
</dbReference>
<dbReference type="RefSeq" id="WP_011239678.1">
    <property type="nucleotide sequence ID" value="NC_006513.1"/>
</dbReference>
<dbReference type="SMR" id="Q5NY31"/>
<dbReference type="STRING" id="76114.ebA6841"/>
<dbReference type="KEGG" id="eba:ebA6841"/>
<dbReference type="eggNOG" id="COG1190">
    <property type="taxonomic scope" value="Bacteria"/>
</dbReference>
<dbReference type="HOGENOM" id="CLU_008255_6_0_4"/>
<dbReference type="OrthoDB" id="9801152at2"/>
<dbReference type="Proteomes" id="UP000006552">
    <property type="component" value="Chromosome"/>
</dbReference>
<dbReference type="GO" id="GO:0005829">
    <property type="term" value="C:cytosol"/>
    <property type="evidence" value="ECO:0007669"/>
    <property type="project" value="TreeGrafter"/>
</dbReference>
<dbReference type="GO" id="GO:0005524">
    <property type="term" value="F:ATP binding"/>
    <property type="evidence" value="ECO:0007669"/>
    <property type="project" value="UniProtKB-UniRule"/>
</dbReference>
<dbReference type="GO" id="GO:0004824">
    <property type="term" value="F:lysine-tRNA ligase activity"/>
    <property type="evidence" value="ECO:0007669"/>
    <property type="project" value="UniProtKB-UniRule"/>
</dbReference>
<dbReference type="GO" id="GO:0000287">
    <property type="term" value="F:magnesium ion binding"/>
    <property type="evidence" value="ECO:0007669"/>
    <property type="project" value="UniProtKB-UniRule"/>
</dbReference>
<dbReference type="GO" id="GO:0000049">
    <property type="term" value="F:tRNA binding"/>
    <property type="evidence" value="ECO:0007669"/>
    <property type="project" value="TreeGrafter"/>
</dbReference>
<dbReference type="GO" id="GO:0006430">
    <property type="term" value="P:lysyl-tRNA aminoacylation"/>
    <property type="evidence" value="ECO:0007669"/>
    <property type="project" value="UniProtKB-UniRule"/>
</dbReference>
<dbReference type="CDD" id="cd00775">
    <property type="entry name" value="LysRS_core"/>
    <property type="match status" value="1"/>
</dbReference>
<dbReference type="CDD" id="cd04322">
    <property type="entry name" value="LysRS_N"/>
    <property type="match status" value="1"/>
</dbReference>
<dbReference type="FunFam" id="2.40.50.140:FF:000024">
    <property type="entry name" value="Lysine--tRNA ligase"/>
    <property type="match status" value="1"/>
</dbReference>
<dbReference type="FunFam" id="3.30.930.10:FF:000001">
    <property type="entry name" value="Lysine--tRNA ligase"/>
    <property type="match status" value="1"/>
</dbReference>
<dbReference type="Gene3D" id="3.30.930.10">
    <property type="entry name" value="Bira Bifunctional Protein, Domain 2"/>
    <property type="match status" value="1"/>
</dbReference>
<dbReference type="Gene3D" id="2.40.50.140">
    <property type="entry name" value="Nucleic acid-binding proteins"/>
    <property type="match status" value="1"/>
</dbReference>
<dbReference type="HAMAP" id="MF_00252">
    <property type="entry name" value="Lys_tRNA_synth_class2"/>
    <property type="match status" value="1"/>
</dbReference>
<dbReference type="InterPro" id="IPR004364">
    <property type="entry name" value="Aa-tRNA-synt_II"/>
</dbReference>
<dbReference type="InterPro" id="IPR006195">
    <property type="entry name" value="aa-tRNA-synth_II"/>
</dbReference>
<dbReference type="InterPro" id="IPR045864">
    <property type="entry name" value="aa-tRNA-synth_II/BPL/LPL"/>
</dbReference>
<dbReference type="InterPro" id="IPR002313">
    <property type="entry name" value="Lys-tRNA-ligase_II"/>
</dbReference>
<dbReference type="InterPro" id="IPR044136">
    <property type="entry name" value="Lys-tRNA-ligase_II_N"/>
</dbReference>
<dbReference type="InterPro" id="IPR018149">
    <property type="entry name" value="Lys-tRNA-synth_II_C"/>
</dbReference>
<dbReference type="InterPro" id="IPR012340">
    <property type="entry name" value="NA-bd_OB-fold"/>
</dbReference>
<dbReference type="InterPro" id="IPR004365">
    <property type="entry name" value="NA-bd_OB_tRNA"/>
</dbReference>
<dbReference type="NCBIfam" id="TIGR00499">
    <property type="entry name" value="lysS_bact"/>
    <property type="match status" value="1"/>
</dbReference>
<dbReference type="NCBIfam" id="NF001756">
    <property type="entry name" value="PRK00484.1"/>
    <property type="match status" value="1"/>
</dbReference>
<dbReference type="PANTHER" id="PTHR42918:SF15">
    <property type="entry name" value="LYSINE--TRNA LIGASE, CHLOROPLASTIC_MITOCHONDRIAL"/>
    <property type="match status" value="1"/>
</dbReference>
<dbReference type="PANTHER" id="PTHR42918">
    <property type="entry name" value="LYSYL-TRNA SYNTHETASE"/>
    <property type="match status" value="1"/>
</dbReference>
<dbReference type="Pfam" id="PF00152">
    <property type="entry name" value="tRNA-synt_2"/>
    <property type="match status" value="1"/>
</dbReference>
<dbReference type="Pfam" id="PF01336">
    <property type="entry name" value="tRNA_anti-codon"/>
    <property type="match status" value="1"/>
</dbReference>
<dbReference type="PRINTS" id="PR00982">
    <property type="entry name" value="TRNASYNTHLYS"/>
</dbReference>
<dbReference type="SUPFAM" id="SSF55681">
    <property type="entry name" value="Class II aaRS and biotin synthetases"/>
    <property type="match status" value="1"/>
</dbReference>
<dbReference type="SUPFAM" id="SSF50249">
    <property type="entry name" value="Nucleic acid-binding proteins"/>
    <property type="match status" value="1"/>
</dbReference>
<dbReference type="PROSITE" id="PS50862">
    <property type="entry name" value="AA_TRNA_LIGASE_II"/>
    <property type="match status" value="1"/>
</dbReference>
<sequence>MSDQNNTPAASQDENHIISERREKLAAWRAGGRAFPNDFSRENIAGKLDEIYGEKESQELDATPVEVKVAGRIMLKRVMGKASFMTIQDLSGQIQLYVTRDAVGEDVYADFKHWDIGDIVGAVGTLFKTRTGELSVKCTDIRLLTKSLRPLPDKFHGLTDVEQKYRQRHLDLIMNEQTRFTFVARSRMVQSIRNYMVSHGFLEVETPMMHPIPGGAAAKPFTTHHNALDMELFLRIAPELYLKRLVVGGFEKVFEVNRNFRNEGLSPRHNPEFTMMEFYEAYANYKSLMNFTEGLLRQAAREALGTEVFVYQGRELDLSKPFARLTIVEAIHQFHPGFSIAQLNDEAWLRAKLTDLKAKLRDDAGLGTLQLMLFEETTEAELWEPTFIIDYPAEVSPLARRNDANPEITERFELFIVGREIANGFSELNDPEDQAARFLEQVKAKEAGDEEAMFYDADYIRALEYGLPPTGGCGIGIDRLVMLLTDSPSIRDVILFPQMRTE</sequence>
<keyword id="KW-0030">Aminoacyl-tRNA synthetase</keyword>
<keyword id="KW-0067">ATP-binding</keyword>
<keyword id="KW-0963">Cytoplasm</keyword>
<keyword id="KW-0436">Ligase</keyword>
<keyword id="KW-0460">Magnesium</keyword>
<keyword id="KW-0479">Metal-binding</keyword>
<keyword id="KW-0547">Nucleotide-binding</keyword>
<keyword id="KW-0648">Protein biosynthesis</keyword>
<keyword id="KW-1185">Reference proteome</keyword>
<comment type="catalytic activity">
    <reaction evidence="1">
        <text>tRNA(Lys) + L-lysine + ATP = L-lysyl-tRNA(Lys) + AMP + diphosphate</text>
        <dbReference type="Rhea" id="RHEA:20792"/>
        <dbReference type="Rhea" id="RHEA-COMP:9696"/>
        <dbReference type="Rhea" id="RHEA-COMP:9697"/>
        <dbReference type="ChEBI" id="CHEBI:30616"/>
        <dbReference type="ChEBI" id="CHEBI:32551"/>
        <dbReference type="ChEBI" id="CHEBI:33019"/>
        <dbReference type="ChEBI" id="CHEBI:78442"/>
        <dbReference type="ChEBI" id="CHEBI:78529"/>
        <dbReference type="ChEBI" id="CHEBI:456215"/>
        <dbReference type="EC" id="6.1.1.6"/>
    </reaction>
</comment>
<comment type="cofactor">
    <cofactor evidence="1">
        <name>Mg(2+)</name>
        <dbReference type="ChEBI" id="CHEBI:18420"/>
    </cofactor>
    <text evidence="1">Binds 3 Mg(2+) ions per subunit.</text>
</comment>
<comment type="subunit">
    <text evidence="1">Homodimer.</text>
</comment>
<comment type="subcellular location">
    <subcellularLocation>
        <location evidence="1">Cytoplasm</location>
    </subcellularLocation>
</comment>
<comment type="similarity">
    <text evidence="1">Belongs to the class-II aminoacyl-tRNA synthetase family.</text>
</comment>